<proteinExistence type="inferred from homology"/>
<sequence length="160" mass="18137">MPSFDIVSEIDTVELRNAVDNSNRELSTRFDFRNVQASFELVEQTVKVSAEGDFQLKQMRDILRGHLAKRGVDANSMDAKTAEQTGKNWHQDIVFLQGIETPMAKKIVKLIKDAKLKVQASIQGDKVRVTGKKRDDLQETIAAIRTAELGQPFQFNNFRD</sequence>
<feature type="chain" id="PRO_0000106207" description="Nucleotide-binding protein VV1636">
    <location>
        <begin position="1"/>
        <end position="160"/>
    </location>
</feature>
<dbReference type="EMBL" id="BA000037">
    <property type="protein sequence ID" value="BAC94400.1"/>
    <property type="molecule type" value="Genomic_DNA"/>
</dbReference>
<dbReference type="RefSeq" id="WP_011150247.1">
    <property type="nucleotide sequence ID" value="NC_005139.1"/>
</dbReference>
<dbReference type="SMR" id="Q7MKZ1"/>
<dbReference type="STRING" id="672.VV93_v1c15110"/>
<dbReference type="KEGG" id="vvy:VV1636"/>
<dbReference type="PATRIC" id="fig|196600.6.peg.1615"/>
<dbReference type="eggNOG" id="COG1666">
    <property type="taxonomic scope" value="Bacteria"/>
</dbReference>
<dbReference type="HOGENOM" id="CLU_099839_1_0_6"/>
<dbReference type="Proteomes" id="UP000002675">
    <property type="component" value="Chromosome I"/>
</dbReference>
<dbReference type="GO" id="GO:0005829">
    <property type="term" value="C:cytosol"/>
    <property type="evidence" value="ECO:0007669"/>
    <property type="project" value="TreeGrafter"/>
</dbReference>
<dbReference type="GO" id="GO:0000166">
    <property type="term" value="F:nucleotide binding"/>
    <property type="evidence" value="ECO:0007669"/>
    <property type="project" value="TreeGrafter"/>
</dbReference>
<dbReference type="CDD" id="cd11740">
    <property type="entry name" value="YajQ_like"/>
    <property type="match status" value="1"/>
</dbReference>
<dbReference type="FunFam" id="3.30.70.860:FF:000001">
    <property type="entry name" value="UPF0234 protein YajQ"/>
    <property type="match status" value="1"/>
</dbReference>
<dbReference type="FunFam" id="3.30.70.990:FF:000001">
    <property type="entry name" value="UPF0234 protein YajQ"/>
    <property type="match status" value="1"/>
</dbReference>
<dbReference type="Gene3D" id="3.30.70.860">
    <property type="match status" value="1"/>
</dbReference>
<dbReference type="Gene3D" id="3.30.70.990">
    <property type="entry name" value="YajQ-like, domain 2"/>
    <property type="match status" value="1"/>
</dbReference>
<dbReference type="HAMAP" id="MF_00632">
    <property type="entry name" value="YajQ"/>
    <property type="match status" value="1"/>
</dbReference>
<dbReference type="InterPro" id="IPR007551">
    <property type="entry name" value="DUF520"/>
</dbReference>
<dbReference type="InterPro" id="IPR035571">
    <property type="entry name" value="UPF0234-like_C"/>
</dbReference>
<dbReference type="InterPro" id="IPR035570">
    <property type="entry name" value="UPF0234_N"/>
</dbReference>
<dbReference type="InterPro" id="IPR036183">
    <property type="entry name" value="YajQ-like_sf"/>
</dbReference>
<dbReference type="NCBIfam" id="NF003819">
    <property type="entry name" value="PRK05412.1"/>
    <property type="match status" value="1"/>
</dbReference>
<dbReference type="PANTHER" id="PTHR30476">
    <property type="entry name" value="UPF0234 PROTEIN YAJQ"/>
    <property type="match status" value="1"/>
</dbReference>
<dbReference type="PANTHER" id="PTHR30476:SF0">
    <property type="entry name" value="UPF0234 PROTEIN YAJQ"/>
    <property type="match status" value="1"/>
</dbReference>
<dbReference type="Pfam" id="PF04461">
    <property type="entry name" value="DUF520"/>
    <property type="match status" value="1"/>
</dbReference>
<dbReference type="SUPFAM" id="SSF89963">
    <property type="entry name" value="YajQ-like"/>
    <property type="match status" value="2"/>
</dbReference>
<protein>
    <recommendedName>
        <fullName evidence="1">Nucleotide-binding protein VV1636</fullName>
    </recommendedName>
</protein>
<gene>
    <name type="ordered locus">VV1636</name>
</gene>
<comment type="function">
    <text evidence="1">Nucleotide-binding protein.</text>
</comment>
<comment type="similarity">
    <text evidence="1">Belongs to the YajQ family.</text>
</comment>
<evidence type="ECO:0000255" key="1">
    <source>
        <dbReference type="HAMAP-Rule" id="MF_00632"/>
    </source>
</evidence>
<reference key="1">
    <citation type="journal article" date="2003" name="Genome Res.">
        <title>Comparative genome analysis of Vibrio vulnificus, a marine pathogen.</title>
        <authorList>
            <person name="Chen C.-Y."/>
            <person name="Wu K.-M."/>
            <person name="Chang Y.-C."/>
            <person name="Chang C.-H."/>
            <person name="Tsai H.-C."/>
            <person name="Liao T.-L."/>
            <person name="Liu Y.-M."/>
            <person name="Chen H.-J."/>
            <person name="Shen A.B.-T."/>
            <person name="Li J.-C."/>
            <person name="Su T.-L."/>
            <person name="Shao C.-P."/>
            <person name="Lee C.-T."/>
            <person name="Hor L.-I."/>
            <person name="Tsai S.-F."/>
        </authorList>
    </citation>
    <scope>NUCLEOTIDE SEQUENCE [LARGE SCALE GENOMIC DNA]</scope>
    <source>
        <strain>YJ016</strain>
    </source>
</reference>
<name>Y1636_VIBVY</name>
<accession>Q7MKZ1</accession>
<organism>
    <name type="scientific">Vibrio vulnificus (strain YJ016)</name>
    <dbReference type="NCBI Taxonomy" id="196600"/>
    <lineage>
        <taxon>Bacteria</taxon>
        <taxon>Pseudomonadati</taxon>
        <taxon>Pseudomonadota</taxon>
        <taxon>Gammaproteobacteria</taxon>
        <taxon>Vibrionales</taxon>
        <taxon>Vibrionaceae</taxon>
        <taxon>Vibrio</taxon>
    </lineage>
</organism>
<keyword id="KW-0547">Nucleotide-binding</keyword>